<organism>
    <name type="scientific">Mus musculus</name>
    <name type="common">Mouse</name>
    <dbReference type="NCBI Taxonomy" id="10090"/>
    <lineage>
        <taxon>Eukaryota</taxon>
        <taxon>Metazoa</taxon>
        <taxon>Chordata</taxon>
        <taxon>Craniata</taxon>
        <taxon>Vertebrata</taxon>
        <taxon>Euteleostomi</taxon>
        <taxon>Mammalia</taxon>
        <taxon>Eutheria</taxon>
        <taxon>Euarchontoglires</taxon>
        <taxon>Glires</taxon>
        <taxon>Rodentia</taxon>
        <taxon>Myomorpha</taxon>
        <taxon>Muroidea</taxon>
        <taxon>Muridae</taxon>
        <taxon>Murinae</taxon>
        <taxon>Mus</taxon>
        <taxon>Mus</taxon>
    </lineage>
</organism>
<name>ID3_MOUSE</name>
<keyword id="KW-0090">Biological rhythms</keyword>
<keyword id="KW-0963">Cytoplasm</keyword>
<keyword id="KW-0217">Developmental protein</keyword>
<keyword id="KW-0517">Myogenesis</keyword>
<keyword id="KW-0539">Nucleus</keyword>
<keyword id="KW-1185">Reference proteome</keyword>
<keyword id="KW-0678">Repressor</keyword>
<keyword id="KW-0804">Transcription</keyword>
<keyword id="KW-0805">Transcription regulation</keyword>
<keyword id="KW-0832">Ubl conjugation</keyword>
<proteinExistence type="evidence at protein level"/>
<comment type="function">
    <text evidence="6 7 8">Transcriptional regulator (lacking a basic DNA binding domain) which negatively regulates the basic helix-loop-helix (bHLH) transcription factors by forming heterodimers and inhibiting their DNA binding and transcriptional activity. Implicated in regulating a variety of cellular processes, including cellular growth, senescence, differentiation, apoptosis, angiogenesis, and neoplastic transformation. Involved in myogenesis by inhibiting skeletal muscle and cardiac myocyte differentiation and promoting muscle precursor cells proliferation. Inhibits the binding of E2A-containing protein complexes to muscle creatine kinase E-box enhancer. Regulates the circadian clock by repressing the transcriptional activator activity of the CLOCK-BMAL1 heterodimer.</text>
</comment>
<comment type="subunit">
    <text evidence="1 3 4 5 8">Homodimer, and heterodimer with other HLH proteins. Interacts with CLOCK and BMAL1 (By similarity). Interacts with COPS5 and COPS7A. Interacts with IFI204. Interacts with GATA4 and NKX2-5. Interacts with ANKRD2; both proteins cooperate in myoblast differentiation.</text>
</comment>
<comment type="interaction">
    <interactant intactId="EBI-309448">
        <id>P41133</id>
    </interactant>
    <interactant intactId="EBI-8854438">
        <id>Q9WV06</id>
        <label>Ankrd2</label>
    </interactant>
    <organismsDiffer>false</organismsDiffer>
    <experiments>4</experiments>
</comment>
<comment type="subcellular location">
    <subcellularLocation>
        <location evidence="2 5">Nucleus</location>
    </subcellularLocation>
    <subcellularLocation>
        <location evidence="5">Cytoplasm</location>
    </subcellularLocation>
    <text>Nuclear in proliferating cells, translocates to cytosol during cell differentiation.</text>
</comment>
<comment type="tissue specificity">
    <text evidence="8">Expressed by myoblasts (at protein level).</text>
</comment>
<comment type="induction">
    <text evidence="6">By a variety of mitogenic agents in serum starved cells. Expressed in a circadian manner in the suprachiasmatic nucleus (SCN) of the brain and heart with peak levels between CT16 and CT20 in SCN and between CT8 and CT12 in the heart.</text>
</comment>
<comment type="PTM">
    <text evidence="5">Polyubiquitinated; which is favored by Ifi204 and leads to proteasomal degradation.</text>
</comment>
<reference key="1">
    <citation type="journal article" date="1991" name="Proc. Natl. Acad. Sci. U.S.A.">
        <title>An Id-related helix-loop-helix protein encoded by a growth factor-inducible gene.</title>
        <authorList>
            <person name="Christy B.A."/>
            <person name="Sanders L.K."/>
            <person name="Lau L.F."/>
            <person name="Copeland N.G."/>
            <person name="Jenkins N.A."/>
            <person name="Nathans D."/>
        </authorList>
    </citation>
    <scope>NUCLEOTIDE SEQUENCE [MRNA]</scope>
</reference>
<reference key="2">
    <citation type="journal article" date="2002" name="Mol. Cell. Biol.">
        <title>The MyoD-inducible p204 protein overcomes the inhibition of myoblast differentiation by Id proteins.</title>
        <authorList>
            <person name="Liu C.-J."/>
            <person name="Ding B."/>
            <person name="Wang H."/>
            <person name="Lengyel P."/>
        </authorList>
    </citation>
    <scope>INTERACTION WITH IFI204</scope>
</reference>
<reference key="3">
    <citation type="journal article" date="2004" name="J. Mol. Biol.">
        <title>Ubiquitin-dependent degradation of Id1 and Id3 is mediated by the COP9 signalosome.</title>
        <authorList>
            <person name="Berse M."/>
            <person name="Bounpheng M."/>
            <person name="Huang X."/>
            <person name="Christy B."/>
            <person name="Pollmann C."/>
            <person name="Dubiel W."/>
        </authorList>
    </citation>
    <scope>INTERACTION WITH COPS5 AND COPS7A</scope>
</reference>
<reference key="4">
    <citation type="journal article" date="2006" name="J. Biol. Chem.">
        <title>p204 protein overcomes the inhibition of the differentiation of P19 murine embryonal carcinoma cells to beating cardiac myocytes by Id proteins.</title>
        <authorList>
            <person name="Ding B."/>
            <person name="Liu C.-J."/>
            <person name="Huang Y."/>
            <person name="Yu J."/>
            <person name="Kong W."/>
            <person name="Lengyel P."/>
        </authorList>
    </citation>
    <scope>INTERACTION WITH GATA4 AND NKX2-5</scope>
    <scope>UBIQUITINATION</scope>
    <scope>SUBCELLULAR LOCATION</scope>
</reference>
<reference key="5">
    <citation type="journal article" date="2009" name="Curr. Biol.">
        <title>A role for Id2 in regulating photic entrainment of the mammalian circadian system.</title>
        <authorList>
            <person name="Duffield G.E."/>
            <person name="Watson N.P."/>
            <person name="Mantani A."/>
            <person name="Peirson S.N."/>
            <person name="Robles-Murguia M."/>
            <person name="Loros J.J."/>
            <person name="Israel M.A."/>
            <person name="Dunlap J.C."/>
        </authorList>
    </citation>
    <scope>FUNCTION</scope>
    <scope>INDUCTION</scope>
</reference>
<reference key="6">
    <citation type="journal article" date="2012" name="Cell Stem Cell">
        <title>Pax3/7BP is a Pax7- and Pax3-binding protein that regulates the proliferation of muscle precursor cells by an epigenetic mechanism.</title>
        <authorList>
            <person name="Diao Y."/>
            <person name="Guo X."/>
            <person name="Li Y."/>
            <person name="Sun K."/>
            <person name="Lu L."/>
            <person name="Jiang L."/>
            <person name="Fu X."/>
            <person name="Zhu H."/>
            <person name="Sun H."/>
            <person name="Wang H."/>
            <person name="Wu Z."/>
        </authorList>
    </citation>
    <scope>FUNCTION</scope>
</reference>
<reference key="7">
    <citation type="journal article" date="2013" name="J. Biol. Chem.">
        <title>Ankyrin repeat domain protein 2 and inhibitor of DNA binding 3 cooperatively inhibit myoblast differentiation by physical interaction.</title>
        <authorList>
            <person name="Mohamed J.S."/>
            <person name="Lopez M.A."/>
            <person name="Cox G.A."/>
            <person name="Boriek A.M."/>
        </authorList>
    </citation>
    <scope>FUNCTION IN MYOBLAST DIFFERENTIATION</scope>
    <scope>INTERACTION WITH ANKRD2</scope>
    <scope>TISSUE SPECIFICITY</scope>
</reference>
<feature type="chain" id="PRO_0000127248" description="DNA-binding protein inhibitor ID-3">
    <location>
        <begin position="1"/>
        <end position="119"/>
    </location>
</feature>
<feature type="domain" description="bHLH" evidence="2">
    <location>
        <begin position="28"/>
        <end position="80"/>
    </location>
</feature>
<feature type="region of interest" description="Interaction with IFI204" evidence="1">
    <location>
        <begin position="35"/>
        <end position="87"/>
    </location>
</feature>
<sequence>MKALSPVRGCYEAVCCLSERSLAIARGRGKSPSTEEPLSLLDDMNHCYSRLRELVPGVPRGTQLSQVEILQRVIDYILDLQVVLAEPAPGPPDGPHLPIQTAELTPELVISKDKRSFCH</sequence>
<protein>
    <recommendedName>
        <fullName>DNA-binding protein inhibitor ID-3</fullName>
    </recommendedName>
    <alternativeName>
        <fullName>ID-like protein inhibitor HLH 462</fullName>
    </alternativeName>
    <alternativeName>
        <fullName>Inhibitor of DNA binding 3</fullName>
    </alternativeName>
    <alternativeName>
        <fullName>Inhibitor of differentiation 3</fullName>
    </alternativeName>
</protein>
<gene>
    <name type="primary">Id3</name>
    <name type="synonym">Hlh462</name>
    <name type="synonym">Id-3</name>
    <name type="synonym">Idb3</name>
</gene>
<dbReference type="EMBL" id="M60523">
    <property type="protein sequence ID" value="AAA37818.1"/>
    <property type="molecule type" value="mRNA"/>
</dbReference>
<dbReference type="CCDS" id="CCDS18800.1"/>
<dbReference type="PIR" id="A39114">
    <property type="entry name" value="A39114"/>
</dbReference>
<dbReference type="RefSeq" id="NP_001416282.1">
    <property type="nucleotide sequence ID" value="NM_001429353.1"/>
</dbReference>
<dbReference type="RefSeq" id="NP_032347.1">
    <property type="nucleotide sequence ID" value="NM_008321.3"/>
</dbReference>
<dbReference type="SMR" id="P41133"/>
<dbReference type="BioGRID" id="200507">
    <property type="interactions" value="11"/>
</dbReference>
<dbReference type="FunCoup" id="P41133">
    <property type="interactions" value="1445"/>
</dbReference>
<dbReference type="IntAct" id="P41133">
    <property type="interactions" value="6"/>
</dbReference>
<dbReference type="MINT" id="P41133"/>
<dbReference type="STRING" id="10090.ENSMUSP00000008016"/>
<dbReference type="iPTMnet" id="P41133"/>
<dbReference type="PhosphoSitePlus" id="P41133"/>
<dbReference type="jPOST" id="P41133"/>
<dbReference type="PaxDb" id="10090-ENSMUSP00000008016"/>
<dbReference type="ProteomicsDB" id="273089"/>
<dbReference type="Pumba" id="P41133"/>
<dbReference type="Antibodypedia" id="4480">
    <property type="antibodies" value="644 antibodies from 39 providers"/>
</dbReference>
<dbReference type="DNASU" id="15903"/>
<dbReference type="Ensembl" id="ENSMUST00000008016.3">
    <property type="protein sequence ID" value="ENSMUSP00000008016.3"/>
    <property type="gene ID" value="ENSMUSG00000007872.4"/>
</dbReference>
<dbReference type="GeneID" id="15903"/>
<dbReference type="KEGG" id="mmu:15903"/>
<dbReference type="UCSC" id="uc012dnf.1">
    <property type="organism name" value="mouse"/>
</dbReference>
<dbReference type="AGR" id="MGI:96398"/>
<dbReference type="CTD" id="3399"/>
<dbReference type="MGI" id="MGI:96398">
    <property type="gene designation" value="Id3"/>
</dbReference>
<dbReference type="VEuPathDB" id="HostDB:ENSMUSG00000007872"/>
<dbReference type="eggNOG" id="ENOG502S53I">
    <property type="taxonomic scope" value="Eukaryota"/>
</dbReference>
<dbReference type="GeneTree" id="ENSGT00940000160504"/>
<dbReference type="HOGENOM" id="CLU_116790_1_0_1"/>
<dbReference type="InParanoid" id="P41133"/>
<dbReference type="OMA" id="PARGCYE"/>
<dbReference type="OrthoDB" id="10047910at2759"/>
<dbReference type="PhylomeDB" id="P41133"/>
<dbReference type="TreeFam" id="TF326217"/>
<dbReference type="BioGRID-ORCS" id="15903">
    <property type="hits" value="1 hit in 80 CRISPR screens"/>
</dbReference>
<dbReference type="ChiTaRS" id="Id3">
    <property type="organism name" value="mouse"/>
</dbReference>
<dbReference type="PRO" id="PR:P41133"/>
<dbReference type="Proteomes" id="UP000000589">
    <property type="component" value="Chromosome 4"/>
</dbReference>
<dbReference type="RNAct" id="P41133">
    <property type="molecule type" value="protein"/>
</dbReference>
<dbReference type="Bgee" id="ENSMUSG00000007872">
    <property type="expression patterns" value="Expressed in endothelial cell of lymphatic vessel and 362 other cell types or tissues"/>
</dbReference>
<dbReference type="ExpressionAtlas" id="P41133">
    <property type="expression patterns" value="baseline and differential"/>
</dbReference>
<dbReference type="GO" id="GO:0005737">
    <property type="term" value="C:cytoplasm"/>
    <property type="evidence" value="ECO:0000314"/>
    <property type="project" value="MGI"/>
</dbReference>
<dbReference type="GO" id="GO:0005634">
    <property type="term" value="C:nucleus"/>
    <property type="evidence" value="ECO:0000315"/>
    <property type="project" value="MGI"/>
</dbReference>
<dbReference type="GO" id="GO:0043425">
    <property type="term" value="F:bHLH transcription factor binding"/>
    <property type="evidence" value="ECO:0000353"/>
    <property type="project" value="UniProtKB"/>
</dbReference>
<dbReference type="GO" id="GO:1901707">
    <property type="term" value="F:leptomycin B binding"/>
    <property type="evidence" value="ECO:0000314"/>
    <property type="project" value="MGI"/>
</dbReference>
<dbReference type="GO" id="GO:0046983">
    <property type="term" value="F:protein dimerization activity"/>
    <property type="evidence" value="ECO:0007669"/>
    <property type="project" value="InterPro"/>
</dbReference>
<dbReference type="GO" id="GO:0019904">
    <property type="term" value="F:protein domain specific binding"/>
    <property type="evidence" value="ECO:0000314"/>
    <property type="project" value="MGI"/>
</dbReference>
<dbReference type="GO" id="GO:0140416">
    <property type="term" value="F:transcription regulator inhibitor activity"/>
    <property type="evidence" value="ECO:0000314"/>
    <property type="project" value="UniProtKB"/>
</dbReference>
<dbReference type="GO" id="GO:0072750">
    <property type="term" value="P:cellular response to leptomycin B"/>
    <property type="evidence" value="ECO:0000314"/>
    <property type="project" value="MGI"/>
</dbReference>
<dbReference type="GO" id="GO:0007417">
    <property type="term" value="P:central nervous system development"/>
    <property type="evidence" value="ECO:0000270"/>
    <property type="project" value="UniProtKB"/>
</dbReference>
<dbReference type="GO" id="GO:0007623">
    <property type="term" value="P:circadian rhythm"/>
    <property type="evidence" value="ECO:0000270"/>
    <property type="project" value="UniProtKB"/>
</dbReference>
<dbReference type="GO" id="GO:0030855">
    <property type="term" value="P:epithelial cell differentiation"/>
    <property type="evidence" value="ECO:0000314"/>
    <property type="project" value="MGI"/>
</dbReference>
<dbReference type="GO" id="GO:0007507">
    <property type="term" value="P:heart development"/>
    <property type="evidence" value="ECO:0000316"/>
    <property type="project" value="MGI"/>
</dbReference>
<dbReference type="GO" id="GO:0001656">
    <property type="term" value="P:metanephros development"/>
    <property type="evidence" value="ECO:0000270"/>
    <property type="project" value="UniProtKB"/>
</dbReference>
<dbReference type="GO" id="GO:0007517">
    <property type="term" value="P:muscle organ development"/>
    <property type="evidence" value="ECO:0007669"/>
    <property type="project" value="UniProtKB-KW"/>
</dbReference>
<dbReference type="GO" id="GO:0045892">
    <property type="term" value="P:negative regulation of DNA-templated transcription"/>
    <property type="evidence" value="ECO:0000314"/>
    <property type="project" value="UniProtKB"/>
</dbReference>
<dbReference type="GO" id="GO:0010629">
    <property type="term" value="P:negative regulation of gene expression"/>
    <property type="evidence" value="ECO:0000314"/>
    <property type="project" value="MGI"/>
</dbReference>
<dbReference type="GO" id="GO:0045662">
    <property type="term" value="P:negative regulation of myoblast differentiation"/>
    <property type="evidence" value="ECO:0000315"/>
    <property type="project" value="UniProtKB"/>
</dbReference>
<dbReference type="GO" id="GO:0045668">
    <property type="term" value="P:negative regulation of osteoblast differentiation"/>
    <property type="evidence" value="ECO:0000316"/>
    <property type="project" value="MGI"/>
</dbReference>
<dbReference type="GO" id="GO:0000122">
    <property type="term" value="P:negative regulation of transcription by RNA polymerase II"/>
    <property type="evidence" value="ECO:0000314"/>
    <property type="project" value="MGI"/>
</dbReference>
<dbReference type="GO" id="GO:0030903">
    <property type="term" value="P:notochord development"/>
    <property type="evidence" value="ECO:0000270"/>
    <property type="project" value="UniProtKB"/>
</dbReference>
<dbReference type="GO" id="GO:0042476">
    <property type="term" value="P:odontogenesis"/>
    <property type="evidence" value="ECO:0000270"/>
    <property type="project" value="UniProtKB"/>
</dbReference>
<dbReference type="GO" id="GO:0010628">
    <property type="term" value="P:positive regulation of gene expression"/>
    <property type="evidence" value="ECO:0000314"/>
    <property type="project" value="UniProtKB"/>
</dbReference>
<dbReference type="CDD" id="cd19693">
    <property type="entry name" value="bHLH_dnHLH_ID3"/>
    <property type="match status" value="1"/>
</dbReference>
<dbReference type="FunFam" id="4.10.280.10:FF:000039">
    <property type="entry name" value="DNA-binding protein inhibitor ID-3"/>
    <property type="match status" value="1"/>
</dbReference>
<dbReference type="Gene3D" id="4.10.280.10">
    <property type="entry name" value="Helix-loop-helix DNA-binding domain"/>
    <property type="match status" value="1"/>
</dbReference>
<dbReference type="InterPro" id="IPR011598">
    <property type="entry name" value="bHLH_dom"/>
</dbReference>
<dbReference type="InterPro" id="IPR026052">
    <property type="entry name" value="DNA-bd_prot-inh"/>
</dbReference>
<dbReference type="InterPro" id="IPR036638">
    <property type="entry name" value="HLH_DNA-bd_sf"/>
</dbReference>
<dbReference type="PANTHER" id="PTHR11723">
    <property type="entry name" value="DNA-BINDING PROTEIN INHIBITOR"/>
    <property type="match status" value="1"/>
</dbReference>
<dbReference type="PANTHER" id="PTHR11723:SF16">
    <property type="entry name" value="DNA-BINDING PROTEIN INHIBITOR ID-3"/>
    <property type="match status" value="1"/>
</dbReference>
<dbReference type="Pfam" id="PF00010">
    <property type="entry name" value="HLH"/>
    <property type="match status" value="1"/>
</dbReference>
<dbReference type="SMART" id="SM00353">
    <property type="entry name" value="HLH"/>
    <property type="match status" value="1"/>
</dbReference>
<dbReference type="SUPFAM" id="SSF47459">
    <property type="entry name" value="HLH, helix-loop-helix DNA-binding domain"/>
    <property type="match status" value="1"/>
</dbReference>
<dbReference type="PROSITE" id="PS50888">
    <property type="entry name" value="BHLH"/>
    <property type="match status" value="1"/>
</dbReference>
<evidence type="ECO:0000250" key="1"/>
<evidence type="ECO:0000255" key="2">
    <source>
        <dbReference type="PROSITE-ProRule" id="PRU00981"/>
    </source>
</evidence>
<evidence type="ECO:0000269" key="3">
    <source>
    </source>
</evidence>
<evidence type="ECO:0000269" key="4">
    <source>
    </source>
</evidence>
<evidence type="ECO:0000269" key="5">
    <source>
    </source>
</evidence>
<evidence type="ECO:0000269" key="6">
    <source>
    </source>
</evidence>
<evidence type="ECO:0000269" key="7">
    <source>
    </source>
</evidence>
<evidence type="ECO:0000269" key="8">
    <source>
    </source>
</evidence>
<accession>P41133</accession>